<gene>
    <name evidence="1" type="primary">rpmG</name>
    <name type="ordered locus">H16_A3035</name>
</gene>
<evidence type="ECO:0000255" key="1">
    <source>
        <dbReference type="HAMAP-Rule" id="MF_00294"/>
    </source>
</evidence>
<evidence type="ECO:0000256" key="2">
    <source>
        <dbReference type="SAM" id="MobiDB-lite"/>
    </source>
</evidence>
<evidence type="ECO:0000305" key="3"/>
<feature type="chain" id="PRO_1000004181" description="Large ribosomal subunit protein bL33">
    <location>
        <begin position="1"/>
        <end position="56"/>
    </location>
</feature>
<feature type="region of interest" description="Disordered" evidence="2">
    <location>
        <begin position="1"/>
        <end position="28"/>
    </location>
</feature>
<feature type="compositionally biased region" description="Basic and acidic residues" evidence="2">
    <location>
        <begin position="1"/>
        <end position="12"/>
    </location>
</feature>
<feature type="compositionally biased region" description="Polar residues" evidence="2">
    <location>
        <begin position="15"/>
        <end position="25"/>
    </location>
</feature>
<proteinExistence type="inferred from homology"/>
<organism>
    <name type="scientific">Cupriavidus necator (strain ATCC 17699 / DSM 428 / KCTC 22496 / NCIMB 10442 / H16 / Stanier 337)</name>
    <name type="common">Ralstonia eutropha</name>
    <dbReference type="NCBI Taxonomy" id="381666"/>
    <lineage>
        <taxon>Bacteria</taxon>
        <taxon>Pseudomonadati</taxon>
        <taxon>Pseudomonadota</taxon>
        <taxon>Betaproteobacteria</taxon>
        <taxon>Burkholderiales</taxon>
        <taxon>Burkholderiaceae</taxon>
        <taxon>Cupriavidus</taxon>
    </lineage>
</organism>
<protein>
    <recommendedName>
        <fullName evidence="1">Large ribosomal subunit protein bL33</fullName>
    </recommendedName>
    <alternativeName>
        <fullName evidence="3">50S ribosomal protein L33</fullName>
    </alternativeName>
</protein>
<accession>Q0K7B1</accession>
<reference key="1">
    <citation type="journal article" date="2006" name="Nat. Biotechnol.">
        <title>Genome sequence of the bioplastic-producing 'Knallgas' bacterium Ralstonia eutropha H16.</title>
        <authorList>
            <person name="Pohlmann A."/>
            <person name="Fricke W.F."/>
            <person name="Reinecke F."/>
            <person name="Kusian B."/>
            <person name="Liesegang H."/>
            <person name="Cramm R."/>
            <person name="Eitinger T."/>
            <person name="Ewering C."/>
            <person name="Poetter M."/>
            <person name="Schwartz E."/>
            <person name="Strittmatter A."/>
            <person name="Voss I."/>
            <person name="Gottschalk G."/>
            <person name="Steinbuechel A."/>
            <person name="Friedrich B."/>
            <person name="Bowien B."/>
        </authorList>
    </citation>
    <scope>NUCLEOTIDE SEQUENCE [LARGE SCALE GENOMIC DNA]</scope>
    <source>
        <strain>ATCC 17699 / DSM 428 / KCTC 22496 / NCIMB 10442 / H16 / Stanier 337</strain>
    </source>
</reference>
<name>RL33_CUPNH</name>
<sequence length="56" mass="6417">MASKGGRDKIKLESTAGTGHFYTTTKNKRTMPEKMEIMKFDPVARKHVAYKETKIK</sequence>
<keyword id="KW-1185">Reference proteome</keyword>
<keyword id="KW-0687">Ribonucleoprotein</keyword>
<keyword id="KW-0689">Ribosomal protein</keyword>
<dbReference type="EMBL" id="AM260479">
    <property type="protein sequence ID" value="CAJ94110.1"/>
    <property type="molecule type" value="Genomic_DNA"/>
</dbReference>
<dbReference type="RefSeq" id="WP_010814980.1">
    <property type="nucleotide sequence ID" value="NZ_CP039287.1"/>
</dbReference>
<dbReference type="SMR" id="Q0K7B1"/>
<dbReference type="STRING" id="381666.H16_A3035"/>
<dbReference type="GeneID" id="98341866"/>
<dbReference type="KEGG" id="reh:H16_A3035"/>
<dbReference type="eggNOG" id="COG0267">
    <property type="taxonomic scope" value="Bacteria"/>
</dbReference>
<dbReference type="HOGENOM" id="CLU_190949_1_1_4"/>
<dbReference type="OrthoDB" id="21586at2"/>
<dbReference type="Proteomes" id="UP000008210">
    <property type="component" value="Chromosome 1"/>
</dbReference>
<dbReference type="GO" id="GO:0022625">
    <property type="term" value="C:cytosolic large ribosomal subunit"/>
    <property type="evidence" value="ECO:0007669"/>
    <property type="project" value="TreeGrafter"/>
</dbReference>
<dbReference type="GO" id="GO:0003735">
    <property type="term" value="F:structural constituent of ribosome"/>
    <property type="evidence" value="ECO:0007669"/>
    <property type="project" value="InterPro"/>
</dbReference>
<dbReference type="GO" id="GO:0006412">
    <property type="term" value="P:translation"/>
    <property type="evidence" value="ECO:0007669"/>
    <property type="project" value="UniProtKB-UniRule"/>
</dbReference>
<dbReference type="FunFam" id="2.20.28.120:FF:000001">
    <property type="entry name" value="50S ribosomal protein L33"/>
    <property type="match status" value="1"/>
</dbReference>
<dbReference type="Gene3D" id="2.20.28.120">
    <property type="entry name" value="Ribosomal protein L33"/>
    <property type="match status" value="1"/>
</dbReference>
<dbReference type="HAMAP" id="MF_00294">
    <property type="entry name" value="Ribosomal_bL33"/>
    <property type="match status" value="1"/>
</dbReference>
<dbReference type="InterPro" id="IPR001705">
    <property type="entry name" value="Ribosomal_bL33"/>
</dbReference>
<dbReference type="InterPro" id="IPR018264">
    <property type="entry name" value="Ribosomal_bL33_CS"/>
</dbReference>
<dbReference type="InterPro" id="IPR038584">
    <property type="entry name" value="Ribosomal_bL33_sf"/>
</dbReference>
<dbReference type="InterPro" id="IPR011332">
    <property type="entry name" value="Ribosomal_zn-bd"/>
</dbReference>
<dbReference type="NCBIfam" id="NF001860">
    <property type="entry name" value="PRK00595.1"/>
    <property type="match status" value="1"/>
</dbReference>
<dbReference type="NCBIfam" id="TIGR01023">
    <property type="entry name" value="rpmG_bact"/>
    <property type="match status" value="1"/>
</dbReference>
<dbReference type="PANTHER" id="PTHR15238">
    <property type="entry name" value="54S RIBOSOMAL PROTEIN L39, MITOCHONDRIAL"/>
    <property type="match status" value="1"/>
</dbReference>
<dbReference type="PANTHER" id="PTHR15238:SF1">
    <property type="entry name" value="LARGE RIBOSOMAL SUBUNIT PROTEIN BL33M"/>
    <property type="match status" value="1"/>
</dbReference>
<dbReference type="Pfam" id="PF00471">
    <property type="entry name" value="Ribosomal_L33"/>
    <property type="match status" value="1"/>
</dbReference>
<dbReference type="SUPFAM" id="SSF57829">
    <property type="entry name" value="Zn-binding ribosomal proteins"/>
    <property type="match status" value="1"/>
</dbReference>
<dbReference type="PROSITE" id="PS00582">
    <property type="entry name" value="RIBOSOMAL_L33"/>
    <property type="match status" value="1"/>
</dbReference>
<comment type="similarity">
    <text evidence="1">Belongs to the bacterial ribosomal protein bL33 family.</text>
</comment>